<feature type="chain" id="PRO_1000097202" description="Phosphoserine aminotransferase">
    <location>
        <begin position="1"/>
        <end position="359"/>
    </location>
</feature>
<feature type="binding site" evidence="1">
    <location>
        <position position="41"/>
    </location>
    <ligand>
        <name>L-glutamate</name>
        <dbReference type="ChEBI" id="CHEBI:29985"/>
    </ligand>
</feature>
<feature type="binding site" evidence="1">
    <location>
        <begin position="75"/>
        <end position="76"/>
    </location>
    <ligand>
        <name>pyridoxal 5'-phosphate</name>
        <dbReference type="ChEBI" id="CHEBI:597326"/>
    </ligand>
</feature>
<feature type="binding site" evidence="1">
    <location>
        <position position="99"/>
    </location>
    <ligand>
        <name>pyridoxal 5'-phosphate</name>
        <dbReference type="ChEBI" id="CHEBI:597326"/>
    </ligand>
</feature>
<feature type="binding site" evidence="1">
    <location>
        <position position="147"/>
    </location>
    <ligand>
        <name>pyridoxal 5'-phosphate</name>
        <dbReference type="ChEBI" id="CHEBI:597326"/>
    </ligand>
</feature>
<feature type="binding site" evidence="1">
    <location>
        <position position="166"/>
    </location>
    <ligand>
        <name>pyridoxal 5'-phosphate</name>
        <dbReference type="ChEBI" id="CHEBI:597326"/>
    </ligand>
</feature>
<feature type="binding site" evidence="1">
    <location>
        <position position="189"/>
    </location>
    <ligand>
        <name>pyridoxal 5'-phosphate</name>
        <dbReference type="ChEBI" id="CHEBI:597326"/>
    </ligand>
</feature>
<feature type="binding site" evidence="1">
    <location>
        <begin position="231"/>
        <end position="232"/>
    </location>
    <ligand>
        <name>pyridoxal 5'-phosphate</name>
        <dbReference type="ChEBI" id="CHEBI:597326"/>
    </ligand>
</feature>
<feature type="modified residue" description="N6-(pyridoxal phosphate)lysine" evidence="1">
    <location>
        <position position="190"/>
    </location>
</feature>
<proteinExistence type="inferred from homology"/>
<protein>
    <recommendedName>
        <fullName evidence="1">Phosphoserine aminotransferase</fullName>
        <ecNumber evidence="1">2.6.1.52</ecNumber>
    </recommendedName>
    <alternativeName>
        <fullName evidence="1">Phosphohydroxythreonine aminotransferase</fullName>
        <shortName evidence="1">PSAT</shortName>
    </alternativeName>
</protein>
<accession>B6YQL2</accession>
<comment type="function">
    <text evidence="1">Catalyzes the reversible conversion of 3-phosphohydroxypyruvate to phosphoserine and of 3-hydroxy-2-oxo-4-phosphonooxybutanoate to phosphohydroxythreonine.</text>
</comment>
<comment type="catalytic activity">
    <reaction evidence="1">
        <text>O-phospho-L-serine + 2-oxoglutarate = 3-phosphooxypyruvate + L-glutamate</text>
        <dbReference type="Rhea" id="RHEA:14329"/>
        <dbReference type="ChEBI" id="CHEBI:16810"/>
        <dbReference type="ChEBI" id="CHEBI:18110"/>
        <dbReference type="ChEBI" id="CHEBI:29985"/>
        <dbReference type="ChEBI" id="CHEBI:57524"/>
        <dbReference type="EC" id="2.6.1.52"/>
    </reaction>
</comment>
<comment type="catalytic activity">
    <reaction evidence="1">
        <text>4-(phosphooxy)-L-threonine + 2-oxoglutarate = (R)-3-hydroxy-2-oxo-4-phosphooxybutanoate + L-glutamate</text>
        <dbReference type="Rhea" id="RHEA:16573"/>
        <dbReference type="ChEBI" id="CHEBI:16810"/>
        <dbReference type="ChEBI" id="CHEBI:29985"/>
        <dbReference type="ChEBI" id="CHEBI:58452"/>
        <dbReference type="ChEBI" id="CHEBI:58538"/>
        <dbReference type="EC" id="2.6.1.52"/>
    </reaction>
</comment>
<comment type="cofactor">
    <cofactor evidence="1">
        <name>pyridoxal 5'-phosphate</name>
        <dbReference type="ChEBI" id="CHEBI:597326"/>
    </cofactor>
    <text evidence="1">Binds 1 pyridoxal phosphate per subunit.</text>
</comment>
<comment type="pathway">
    <text evidence="1">Amino-acid biosynthesis; L-serine biosynthesis; L-serine from 3-phospho-D-glycerate: step 2/3.</text>
</comment>
<comment type="pathway">
    <text evidence="1">Cofactor biosynthesis; pyridoxine 5'-phosphate biosynthesis; pyridoxine 5'-phosphate from D-erythrose 4-phosphate: step 3/5.</text>
</comment>
<comment type="subunit">
    <text evidence="1">Homodimer.</text>
</comment>
<comment type="subcellular location">
    <subcellularLocation>
        <location evidence="1">Cytoplasm</location>
    </subcellularLocation>
</comment>
<comment type="similarity">
    <text evidence="1">Belongs to the class-V pyridoxal-phosphate-dependent aminotransferase family. SerC subfamily.</text>
</comment>
<organism>
    <name type="scientific">Azobacteroides pseudotrichonymphae genomovar. CFP2</name>
    <dbReference type="NCBI Taxonomy" id="511995"/>
    <lineage>
        <taxon>Bacteria</taxon>
        <taxon>Pseudomonadati</taxon>
        <taxon>Bacteroidota</taxon>
        <taxon>Bacteroidia</taxon>
        <taxon>Bacteroidales</taxon>
        <taxon>Candidatus Azobacteroides</taxon>
    </lineage>
</organism>
<name>SERC_AZOPC</name>
<gene>
    <name evidence="1" type="primary">serC</name>
    <name type="ordered locus">CFPG_221</name>
</gene>
<evidence type="ECO:0000255" key="1">
    <source>
        <dbReference type="HAMAP-Rule" id="MF_00160"/>
    </source>
</evidence>
<dbReference type="EC" id="2.6.1.52" evidence="1"/>
<dbReference type="EMBL" id="AP010656">
    <property type="protein sequence ID" value="BAG83484.1"/>
    <property type="molecule type" value="Genomic_DNA"/>
</dbReference>
<dbReference type="RefSeq" id="WP_012573245.1">
    <property type="nucleotide sequence ID" value="NC_011565.1"/>
</dbReference>
<dbReference type="SMR" id="B6YQL2"/>
<dbReference type="STRING" id="511995.CFPG_221"/>
<dbReference type="KEGG" id="aps:CFPG_221"/>
<dbReference type="eggNOG" id="COG1932">
    <property type="taxonomic scope" value="Bacteria"/>
</dbReference>
<dbReference type="HOGENOM" id="CLU_034866_0_2_10"/>
<dbReference type="OrthoDB" id="9809412at2"/>
<dbReference type="UniPathway" id="UPA00135">
    <property type="reaction ID" value="UER00197"/>
</dbReference>
<dbReference type="UniPathway" id="UPA00244">
    <property type="reaction ID" value="UER00311"/>
</dbReference>
<dbReference type="Proteomes" id="UP000000723">
    <property type="component" value="Chromosome"/>
</dbReference>
<dbReference type="GO" id="GO:0005737">
    <property type="term" value="C:cytoplasm"/>
    <property type="evidence" value="ECO:0007669"/>
    <property type="project" value="UniProtKB-SubCell"/>
</dbReference>
<dbReference type="GO" id="GO:0004648">
    <property type="term" value="F:O-phospho-L-serine:2-oxoglutarate aminotransferase activity"/>
    <property type="evidence" value="ECO:0007669"/>
    <property type="project" value="UniProtKB-UniRule"/>
</dbReference>
<dbReference type="GO" id="GO:0030170">
    <property type="term" value="F:pyridoxal phosphate binding"/>
    <property type="evidence" value="ECO:0007669"/>
    <property type="project" value="UniProtKB-UniRule"/>
</dbReference>
<dbReference type="GO" id="GO:0006564">
    <property type="term" value="P:L-serine biosynthetic process"/>
    <property type="evidence" value="ECO:0007669"/>
    <property type="project" value="UniProtKB-UniRule"/>
</dbReference>
<dbReference type="GO" id="GO:0008615">
    <property type="term" value="P:pyridoxine biosynthetic process"/>
    <property type="evidence" value="ECO:0007669"/>
    <property type="project" value="UniProtKB-UniRule"/>
</dbReference>
<dbReference type="FunFam" id="3.40.640.10:FF:000010">
    <property type="entry name" value="Phosphoserine aminotransferase"/>
    <property type="match status" value="1"/>
</dbReference>
<dbReference type="FunFam" id="3.90.1150.10:FF:000006">
    <property type="entry name" value="Phosphoserine aminotransferase"/>
    <property type="match status" value="1"/>
</dbReference>
<dbReference type="Gene3D" id="3.90.1150.10">
    <property type="entry name" value="Aspartate Aminotransferase, domain 1"/>
    <property type="match status" value="1"/>
</dbReference>
<dbReference type="Gene3D" id="3.40.640.10">
    <property type="entry name" value="Type I PLP-dependent aspartate aminotransferase-like (Major domain)"/>
    <property type="match status" value="1"/>
</dbReference>
<dbReference type="HAMAP" id="MF_00160">
    <property type="entry name" value="SerC_aminotrans_5"/>
    <property type="match status" value="1"/>
</dbReference>
<dbReference type="InterPro" id="IPR000192">
    <property type="entry name" value="Aminotrans_V_dom"/>
</dbReference>
<dbReference type="InterPro" id="IPR020578">
    <property type="entry name" value="Aminotrans_V_PyrdxlP_BS"/>
</dbReference>
<dbReference type="InterPro" id="IPR022278">
    <property type="entry name" value="Pser_aminoTfrase"/>
</dbReference>
<dbReference type="InterPro" id="IPR015424">
    <property type="entry name" value="PyrdxlP-dep_Trfase"/>
</dbReference>
<dbReference type="InterPro" id="IPR015421">
    <property type="entry name" value="PyrdxlP-dep_Trfase_major"/>
</dbReference>
<dbReference type="InterPro" id="IPR015422">
    <property type="entry name" value="PyrdxlP-dep_Trfase_small"/>
</dbReference>
<dbReference type="NCBIfam" id="NF003764">
    <property type="entry name" value="PRK05355.1"/>
    <property type="match status" value="1"/>
</dbReference>
<dbReference type="NCBIfam" id="TIGR01364">
    <property type="entry name" value="serC_1"/>
    <property type="match status" value="1"/>
</dbReference>
<dbReference type="PANTHER" id="PTHR43247">
    <property type="entry name" value="PHOSPHOSERINE AMINOTRANSFERASE"/>
    <property type="match status" value="1"/>
</dbReference>
<dbReference type="PANTHER" id="PTHR43247:SF1">
    <property type="entry name" value="PHOSPHOSERINE AMINOTRANSFERASE"/>
    <property type="match status" value="1"/>
</dbReference>
<dbReference type="Pfam" id="PF00266">
    <property type="entry name" value="Aminotran_5"/>
    <property type="match status" value="1"/>
</dbReference>
<dbReference type="PIRSF" id="PIRSF000525">
    <property type="entry name" value="SerC"/>
    <property type="match status" value="1"/>
</dbReference>
<dbReference type="SUPFAM" id="SSF53383">
    <property type="entry name" value="PLP-dependent transferases"/>
    <property type="match status" value="1"/>
</dbReference>
<dbReference type="PROSITE" id="PS00595">
    <property type="entry name" value="AA_TRANSFER_CLASS_5"/>
    <property type="match status" value="1"/>
</dbReference>
<reference key="1">
    <citation type="journal article" date="2008" name="Science">
        <title>Genome of an endosymbiont coupling N2 fixation to cellulolysis within RT protist cells in termite gut.</title>
        <authorList>
            <person name="Hongoh Y."/>
            <person name="Sharma V.K."/>
            <person name="Prakash T."/>
            <person name="Noda S."/>
            <person name="Toh H."/>
            <person name="Taylor T.D."/>
            <person name="Kudo T."/>
            <person name="Sakaki Y."/>
            <person name="Toyoda A."/>
            <person name="Hattori M."/>
            <person name="Ohkuma M."/>
        </authorList>
    </citation>
    <scope>NUCLEOTIDE SEQUENCE [LARGE SCALE GENOMIC DNA]</scope>
</reference>
<keyword id="KW-0028">Amino-acid biosynthesis</keyword>
<keyword id="KW-0032">Aminotransferase</keyword>
<keyword id="KW-0963">Cytoplasm</keyword>
<keyword id="KW-0663">Pyridoxal phosphate</keyword>
<keyword id="KW-0664">Pyridoxine biosynthesis</keyword>
<keyword id="KW-1185">Reference proteome</keyword>
<keyword id="KW-0718">Serine biosynthesis</keyword>
<keyword id="KW-0808">Transferase</keyword>
<sequence length="359" mass="40077">MKKYNFNPGPSILPQETVNNTARAITNFSNSGLSLMEISHRSKDFQLMINETIVLFKELLSIPEGYSVLFLGGGASLQFCMVPYNLLETKAAYLNSGAWASKAIKEARLFGEIIEVASSREANFSYIPKNYIVPSDSDYFHITTNNTIFGTEIHHDIESSVPLVADMSSDIFSRPINISKYGLIYGGAQKNLGPAGVTFVIVKDSLLGNVSRPIPSMLDYRIHIKNESMFNTPPVVPIYASLQTLKWLKTLGGVEEVYKKNKEKATFLYEEIDRNRLFKGIAATEDRSLMNVCFIMNDEYKNLESAFQQFASSKGMVGIKGHRSVGGFRASIYNALPKESIKALVSVMREFEKIHCKGI</sequence>